<organism>
    <name type="scientific">Vibrio parahaemolyticus serotype O3:K6 (strain RIMD 2210633)</name>
    <dbReference type="NCBI Taxonomy" id="223926"/>
    <lineage>
        <taxon>Bacteria</taxon>
        <taxon>Pseudomonadati</taxon>
        <taxon>Pseudomonadota</taxon>
        <taxon>Gammaproteobacteria</taxon>
        <taxon>Vibrionales</taxon>
        <taxon>Vibrionaceae</taxon>
        <taxon>Vibrio</taxon>
    </lineage>
</organism>
<keyword id="KW-0687">Ribonucleoprotein</keyword>
<keyword id="KW-0689">Ribosomal protein</keyword>
<keyword id="KW-0694">RNA-binding</keyword>
<keyword id="KW-0699">rRNA-binding</keyword>
<name>RL14_VIBPA</name>
<protein>
    <recommendedName>
        <fullName evidence="1">Large ribosomal subunit protein uL14</fullName>
    </recommendedName>
    <alternativeName>
        <fullName evidence="2">50S ribosomal protein L14</fullName>
    </alternativeName>
</protein>
<reference key="1">
    <citation type="journal article" date="2003" name="Lancet">
        <title>Genome sequence of Vibrio parahaemolyticus: a pathogenic mechanism distinct from that of V. cholerae.</title>
        <authorList>
            <person name="Makino K."/>
            <person name="Oshima K."/>
            <person name="Kurokawa K."/>
            <person name="Yokoyama K."/>
            <person name="Uda T."/>
            <person name="Tagomori K."/>
            <person name="Iijima Y."/>
            <person name="Najima M."/>
            <person name="Nakano M."/>
            <person name="Yamashita A."/>
            <person name="Kubota Y."/>
            <person name="Kimura S."/>
            <person name="Yasunaga T."/>
            <person name="Honda T."/>
            <person name="Shinagawa H."/>
            <person name="Hattori M."/>
            <person name="Iida T."/>
        </authorList>
    </citation>
    <scope>NUCLEOTIDE SEQUENCE [LARGE SCALE GENOMIC DNA]</scope>
    <source>
        <strain>RIMD 2210633</strain>
    </source>
</reference>
<evidence type="ECO:0000255" key="1">
    <source>
        <dbReference type="HAMAP-Rule" id="MF_01367"/>
    </source>
</evidence>
<evidence type="ECO:0000305" key="2"/>
<sequence length="123" mass="13573">MIQMQSMLDAADNSGARSVMCIKVLGGSHRRYAHIGDVIKVTVKEAIPRGKVKKGDVMKAVVVRTRKGVRRPDGSVIRFDRNACVLLNNTTEQPIGTRIFGPVTRELRGDKFMKIVSLAPEVL</sequence>
<feature type="chain" id="PRO_0000266580" description="Large ribosomal subunit protein uL14">
    <location>
        <begin position="1"/>
        <end position="123"/>
    </location>
</feature>
<accession>Q87T03</accession>
<gene>
    <name evidence="1" type="primary">rplN</name>
    <name type="ordered locus">VP0267</name>
</gene>
<comment type="function">
    <text evidence="1">Binds to 23S rRNA. Forms part of two intersubunit bridges in the 70S ribosome.</text>
</comment>
<comment type="subunit">
    <text evidence="1">Part of the 50S ribosomal subunit. Forms a cluster with proteins L3 and L19. In the 70S ribosome, L14 and L19 interact and together make contacts with the 16S rRNA in bridges B5 and B8.</text>
</comment>
<comment type="similarity">
    <text evidence="1">Belongs to the universal ribosomal protein uL14 family.</text>
</comment>
<dbReference type="EMBL" id="BA000031">
    <property type="protein sequence ID" value="BAC58530.1"/>
    <property type="molecule type" value="Genomic_DNA"/>
</dbReference>
<dbReference type="RefSeq" id="NP_796646.1">
    <property type="nucleotide sequence ID" value="NC_004603.1"/>
</dbReference>
<dbReference type="RefSeq" id="WP_005489425.1">
    <property type="nucleotide sequence ID" value="NC_004603.1"/>
</dbReference>
<dbReference type="SMR" id="Q87T03"/>
<dbReference type="GeneID" id="48229186"/>
<dbReference type="KEGG" id="vpa:VP0267"/>
<dbReference type="PATRIC" id="fig|223926.6.peg.258"/>
<dbReference type="eggNOG" id="COG0093">
    <property type="taxonomic scope" value="Bacteria"/>
</dbReference>
<dbReference type="HOGENOM" id="CLU_095071_2_1_6"/>
<dbReference type="Proteomes" id="UP000002493">
    <property type="component" value="Chromosome 1"/>
</dbReference>
<dbReference type="GO" id="GO:0022625">
    <property type="term" value="C:cytosolic large ribosomal subunit"/>
    <property type="evidence" value="ECO:0007669"/>
    <property type="project" value="TreeGrafter"/>
</dbReference>
<dbReference type="GO" id="GO:0070180">
    <property type="term" value="F:large ribosomal subunit rRNA binding"/>
    <property type="evidence" value="ECO:0007669"/>
    <property type="project" value="TreeGrafter"/>
</dbReference>
<dbReference type="GO" id="GO:0003735">
    <property type="term" value="F:structural constituent of ribosome"/>
    <property type="evidence" value="ECO:0007669"/>
    <property type="project" value="InterPro"/>
</dbReference>
<dbReference type="GO" id="GO:0006412">
    <property type="term" value="P:translation"/>
    <property type="evidence" value="ECO:0007669"/>
    <property type="project" value="UniProtKB-UniRule"/>
</dbReference>
<dbReference type="CDD" id="cd00337">
    <property type="entry name" value="Ribosomal_uL14"/>
    <property type="match status" value="1"/>
</dbReference>
<dbReference type="FunFam" id="2.40.150.20:FF:000001">
    <property type="entry name" value="50S ribosomal protein L14"/>
    <property type="match status" value="1"/>
</dbReference>
<dbReference type="Gene3D" id="2.40.150.20">
    <property type="entry name" value="Ribosomal protein L14"/>
    <property type="match status" value="1"/>
</dbReference>
<dbReference type="HAMAP" id="MF_01367">
    <property type="entry name" value="Ribosomal_uL14"/>
    <property type="match status" value="1"/>
</dbReference>
<dbReference type="InterPro" id="IPR000218">
    <property type="entry name" value="Ribosomal_uL14"/>
</dbReference>
<dbReference type="InterPro" id="IPR005745">
    <property type="entry name" value="Ribosomal_uL14_bac-type"/>
</dbReference>
<dbReference type="InterPro" id="IPR019972">
    <property type="entry name" value="Ribosomal_uL14_CS"/>
</dbReference>
<dbReference type="InterPro" id="IPR036853">
    <property type="entry name" value="Ribosomal_uL14_sf"/>
</dbReference>
<dbReference type="NCBIfam" id="TIGR01067">
    <property type="entry name" value="rplN_bact"/>
    <property type="match status" value="1"/>
</dbReference>
<dbReference type="PANTHER" id="PTHR11761">
    <property type="entry name" value="50S/60S RIBOSOMAL PROTEIN L14/L23"/>
    <property type="match status" value="1"/>
</dbReference>
<dbReference type="PANTHER" id="PTHR11761:SF3">
    <property type="entry name" value="LARGE RIBOSOMAL SUBUNIT PROTEIN UL14M"/>
    <property type="match status" value="1"/>
</dbReference>
<dbReference type="Pfam" id="PF00238">
    <property type="entry name" value="Ribosomal_L14"/>
    <property type="match status" value="1"/>
</dbReference>
<dbReference type="SMART" id="SM01374">
    <property type="entry name" value="Ribosomal_L14"/>
    <property type="match status" value="1"/>
</dbReference>
<dbReference type="SUPFAM" id="SSF50193">
    <property type="entry name" value="Ribosomal protein L14"/>
    <property type="match status" value="1"/>
</dbReference>
<dbReference type="PROSITE" id="PS00049">
    <property type="entry name" value="RIBOSOMAL_L14"/>
    <property type="match status" value="1"/>
</dbReference>
<proteinExistence type="inferred from homology"/>